<gene>
    <name evidence="1" type="primary">coaE</name>
    <name type="ordered locus">BA_4828</name>
    <name type="ordered locus">GBAA_4828</name>
    <name type="ordered locus">BAS4479</name>
</gene>
<proteinExistence type="inferred from homology"/>
<evidence type="ECO:0000255" key="1">
    <source>
        <dbReference type="HAMAP-Rule" id="MF_00376"/>
    </source>
</evidence>
<name>COAE_BACAN</name>
<comment type="function">
    <text evidence="1">Catalyzes the phosphorylation of the 3'-hydroxyl group of dephosphocoenzyme A to form coenzyme A.</text>
</comment>
<comment type="catalytic activity">
    <reaction evidence="1">
        <text>3'-dephospho-CoA + ATP = ADP + CoA + H(+)</text>
        <dbReference type="Rhea" id="RHEA:18245"/>
        <dbReference type="ChEBI" id="CHEBI:15378"/>
        <dbReference type="ChEBI" id="CHEBI:30616"/>
        <dbReference type="ChEBI" id="CHEBI:57287"/>
        <dbReference type="ChEBI" id="CHEBI:57328"/>
        <dbReference type="ChEBI" id="CHEBI:456216"/>
        <dbReference type="EC" id="2.7.1.24"/>
    </reaction>
</comment>
<comment type="pathway">
    <text evidence="1">Cofactor biosynthesis; coenzyme A biosynthesis; CoA from (R)-pantothenate: step 5/5.</text>
</comment>
<comment type="subcellular location">
    <subcellularLocation>
        <location evidence="1">Cytoplasm</location>
    </subcellularLocation>
</comment>
<comment type="similarity">
    <text evidence="1">Belongs to the CoaE family.</text>
</comment>
<keyword id="KW-0067">ATP-binding</keyword>
<keyword id="KW-0173">Coenzyme A biosynthesis</keyword>
<keyword id="KW-0963">Cytoplasm</keyword>
<keyword id="KW-0418">Kinase</keyword>
<keyword id="KW-0547">Nucleotide-binding</keyword>
<keyword id="KW-1185">Reference proteome</keyword>
<keyword id="KW-0808">Transferase</keyword>
<reference key="1">
    <citation type="journal article" date="2003" name="Nature">
        <title>The genome sequence of Bacillus anthracis Ames and comparison to closely related bacteria.</title>
        <authorList>
            <person name="Read T.D."/>
            <person name="Peterson S.N."/>
            <person name="Tourasse N.J."/>
            <person name="Baillie L.W."/>
            <person name="Paulsen I.T."/>
            <person name="Nelson K.E."/>
            <person name="Tettelin H."/>
            <person name="Fouts D.E."/>
            <person name="Eisen J.A."/>
            <person name="Gill S.R."/>
            <person name="Holtzapple E.K."/>
            <person name="Okstad O.A."/>
            <person name="Helgason E."/>
            <person name="Rilstone J."/>
            <person name="Wu M."/>
            <person name="Kolonay J.F."/>
            <person name="Beanan M.J."/>
            <person name="Dodson R.J."/>
            <person name="Brinkac L.M."/>
            <person name="Gwinn M.L."/>
            <person name="DeBoy R.T."/>
            <person name="Madpu R."/>
            <person name="Daugherty S.C."/>
            <person name="Durkin A.S."/>
            <person name="Haft D.H."/>
            <person name="Nelson W.C."/>
            <person name="Peterson J.D."/>
            <person name="Pop M."/>
            <person name="Khouri H.M."/>
            <person name="Radune D."/>
            <person name="Benton J.L."/>
            <person name="Mahamoud Y."/>
            <person name="Jiang L."/>
            <person name="Hance I.R."/>
            <person name="Weidman J.F."/>
            <person name="Berry K.J."/>
            <person name="Plaut R.D."/>
            <person name="Wolf A.M."/>
            <person name="Watkins K.L."/>
            <person name="Nierman W.C."/>
            <person name="Hazen A."/>
            <person name="Cline R.T."/>
            <person name="Redmond C."/>
            <person name="Thwaite J.E."/>
            <person name="White O."/>
            <person name="Salzberg S.L."/>
            <person name="Thomason B."/>
            <person name="Friedlander A.M."/>
            <person name="Koehler T.M."/>
            <person name="Hanna P.C."/>
            <person name="Kolstoe A.-B."/>
            <person name="Fraser C.M."/>
        </authorList>
    </citation>
    <scope>NUCLEOTIDE SEQUENCE [LARGE SCALE GENOMIC DNA]</scope>
    <source>
        <strain>Ames / isolate Porton</strain>
    </source>
</reference>
<reference key="2">
    <citation type="journal article" date="2009" name="J. Bacteriol.">
        <title>The complete genome sequence of Bacillus anthracis Ames 'Ancestor'.</title>
        <authorList>
            <person name="Ravel J."/>
            <person name="Jiang L."/>
            <person name="Stanley S.T."/>
            <person name="Wilson M.R."/>
            <person name="Decker R.S."/>
            <person name="Read T.D."/>
            <person name="Worsham P."/>
            <person name="Keim P.S."/>
            <person name="Salzberg S.L."/>
            <person name="Fraser-Liggett C.M."/>
            <person name="Rasko D.A."/>
        </authorList>
    </citation>
    <scope>NUCLEOTIDE SEQUENCE [LARGE SCALE GENOMIC DNA]</scope>
    <source>
        <strain>Ames ancestor</strain>
    </source>
</reference>
<reference key="3">
    <citation type="submission" date="2004-01" db="EMBL/GenBank/DDBJ databases">
        <title>Complete genome sequence of Bacillus anthracis Sterne.</title>
        <authorList>
            <person name="Brettin T.S."/>
            <person name="Bruce D."/>
            <person name="Challacombe J.F."/>
            <person name="Gilna P."/>
            <person name="Han C."/>
            <person name="Hill K."/>
            <person name="Hitchcock P."/>
            <person name="Jackson P."/>
            <person name="Keim P."/>
            <person name="Longmire J."/>
            <person name="Lucas S."/>
            <person name="Okinaka R."/>
            <person name="Richardson P."/>
            <person name="Rubin E."/>
            <person name="Tice H."/>
        </authorList>
    </citation>
    <scope>NUCLEOTIDE SEQUENCE [LARGE SCALE GENOMIC DNA]</scope>
    <source>
        <strain>Sterne</strain>
    </source>
</reference>
<organism>
    <name type="scientific">Bacillus anthracis</name>
    <dbReference type="NCBI Taxonomy" id="1392"/>
    <lineage>
        <taxon>Bacteria</taxon>
        <taxon>Bacillati</taxon>
        <taxon>Bacillota</taxon>
        <taxon>Bacilli</taxon>
        <taxon>Bacillales</taxon>
        <taxon>Bacillaceae</taxon>
        <taxon>Bacillus</taxon>
        <taxon>Bacillus cereus group</taxon>
    </lineage>
</organism>
<accession>Q6HSG2</accession>
<accession>Q6KLQ7</accession>
<accession>Q81L06</accession>
<sequence>MTVVIGLTGGIASGKSTVSQMFRELSIPVIDADIIAREVVEKGKPAYNKIVEVFGTEVLQEDGELDRPKLGSVVFYNEEKRLQLNKIVHPAVREEMNRQKEMYIKEGMQAVVLDIPLLFESKLTSLVDRVLVVAVKPHTQLERLMKRNNFSEEEATARIQSQMPLEEKVKNADEVINNDGTIMGTKTQLQAILKKWNIID</sequence>
<dbReference type="EC" id="2.7.1.24" evidence="1"/>
<dbReference type="EMBL" id="AE016879">
    <property type="protein sequence ID" value="AAP28517.1"/>
    <property type="molecule type" value="Genomic_DNA"/>
</dbReference>
<dbReference type="EMBL" id="AE017334">
    <property type="protein sequence ID" value="AAT33948.1"/>
    <property type="molecule type" value="Genomic_DNA"/>
</dbReference>
<dbReference type="EMBL" id="AE017225">
    <property type="protein sequence ID" value="AAT56777.1"/>
    <property type="molecule type" value="Genomic_DNA"/>
</dbReference>
<dbReference type="RefSeq" id="NP_847031.1">
    <property type="nucleotide sequence ID" value="NC_003997.3"/>
</dbReference>
<dbReference type="RefSeq" id="WP_000219304.1">
    <property type="nucleotide sequence ID" value="NZ_WXXJ01000026.1"/>
</dbReference>
<dbReference type="RefSeq" id="YP_030726.1">
    <property type="nucleotide sequence ID" value="NC_005945.1"/>
</dbReference>
<dbReference type="SMR" id="Q6HSG2"/>
<dbReference type="STRING" id="261594.GBAA_4828"/>
<dbReference type="DNASU" id="1083978"/>
<dbReference type="GeneID" id="45024456"/>
<dbReference type="KEGG" id="ban:BA_4828"/>
<dbReference type="KEGG" id="banh:HYU01_23525"/>
<dbReference type="KEGG" id="bar:GBAA_4828"/>
<dbReference type="KEGG" id="bat:BAS4479"/>
<dbReference type="PATRIC" id="fig|198094.11.peg.4789"/>
<dbReference type="eggNOG" id="COG0237">
    <property type="taxonomic scope" value="Bacteria"/>
</dbReference>
<dbReference type="HOGENOM" id="CLU_057180_0_0_9"/>
<dbReference type="OMA" id="CQMDIEQ"/>
<dbReference type="OrthoDB" id="9812943at2"/>
<dbReference type="UniPathway" id="UPA00241">
    <property type="reaction ID" value="UER00356"/>
</dbReference>
<dbReference type="Proteomes" id="UP000000427">
    <property type="component" value="Chromosome"/>
</dbReference>
<dbReference type="Proteomes" id="UP000000594">
    <property type="component" value="Chromosome"/>
</dbReference>
<dbReference type="GO" id="GO:0005737">
    <property type="term" value="C:cytoplasm"/>
    <property type="evidence" value="ECO:0007669"/>
    <property type="project" value="UniProtKB-SubCell"/>
</dbReference>
<dbReference type="GO" id="GO:0005524">
    <property type="term" value="F:ATP binding"/>
    <property type="evidence" value="ECO:0007669"/>
    <property type="project" value="UniProtKB-UniRule"/>
</dbReference>
<dbReference type="GO" id="GO:0004140">
    <property type="term" value="F:dephospho-CoA kinase activity"/>
    <property type="evidence" value="ECO:0007669"/>
    <property type="project" value="UniProtKB-UniRule"/>
</dbReference>
<dbReference type="GO" id="GO:0015937">
    <property type="term" value="P:coenzyme A biosynthetic process"/>
    <property type="evidence" value="ECO:0007669"/>
    <property type="project" value="UniProtKB-UniRule"/>
</dbReference>
<dbReference type="CDD" id="cd02022">
    <property type="entry name" value="DPCK"/>
    <property type="match status" value="1"/>
</dbReference>
<dbReference type="FunFam" id="3.40.50.300:FF:000485">
    <property type="entry name" value="Dephospho-CoA kinase CAB5"/>
    <property type="match status" value="1"/>
</dbReference>
<dbReference type="Gene3D" id="3.40.50.300">
    <property type="entry name" value="P-loop containing nucleotide triphosphate hydrolases"/>
    <property type="match status" value="1"/>
</dbReference>
<dbReference type="HAMAP" id="MF_00376">
    <property type="entry name" value="Dephospho_CoA_kinase"/>
    <property type="match status" value="1"/>
</dbReference>
<dbReference type="InterPro" id="IPR001977">
    <property type="entry name" value="Depp_CoAkinase"/>
</dbReference>
<dbReference type="InterPro" id="IPR027417">
    <property type="entry name" value="P-loop_NTPase"/>
</dbReference>
<dbReference type="NCBIfam" id="TIGR00152">
    <property type="entry name" value="dephospho-CoA kinase"/>
    <property type="match status" value="1"/>
</dbReference>
<dbReference type="PANTHER" id="PTHR10695:SF46">
    <property type="entry name" value="BIFUNCTIONAL COENZYME A SYNTHASE-RELATED"/>
    <property type="match status" value="1"/>
</dbReference>
<dbReference type="PANTHER" id="PTHR10695">
    <property type="entry name" value="DEPHOSPHO-COA KINASE-RELATED"/>
    <property type="match status" value="1"/>
</dbReference>
<dbReference type="Pfam" id="PF01121">
    <property type="entry name" value="CoaE"/>
    <property type="match status" value="1"/>
</dbReference>
<dbReference type="SUPFAM" id="SSF52540">
    <property type="entry name" value="P-loop containing nucleoside triphosphate hydrolases"/>
    <property type="match status" value="1"/>
</dbReference>
<dbReference type="PROSITE" id="PS51219">
    <property type="entry name" value="DPCK"/>
    <property type="match status" value="1"/>
</dbReference>
<feature type="chain" id="PRO_0000172901" description="Dephospho-CoA kinase">
    <location>
        <begin position="1"/>
        <end position="200"/>
    </location>
</feature>
<feature type="domain" description="DPCK" evidence="1">
    <location>
        <begin position="4"/>
        <end position="200"/>
    </location>
</feature>
<feature type="binding site" evidence="1">
    <location>
        <begin position="12"/>
        <end position="17"/>
    </location>
    <ligand>
        <name>ATP</name>
        <dbReference type="ChEBI" id="CHEBI:30616"/>
    </ligand>
</feature>
<protein>
    <recommendedName>
        <fullName evidence="1">Dephospho-CoA kinase</fullName>
        <ecNumber evidence="1">2.7.1.24</ecNumber>
    </recommendedName>
    <alternativeName>
        <fullName evidence="1">Dephosphocoenzyme A kinase</fullName>
    </alternativeName>
</protein>